<name>LEU1_ECO81</name>
<sequence length="523" mass="57241">MSQQVIIFDTTLRDGEQALQASLSVKEKLQIALALERMGVDVMEVGFPVSSPGDFESVQTIALQVKNSRVCALARCVEKDIDVAAESLKVAEAFRIHTFIATSPMHIATKLRSTLDEVIERAIYMVKRARNYTDDVEFSCEDAGRTPIADLARVVEAAINAGATTINIPDTVGYTMPFEFAGIISGLYERVPNIDKAIISVHTHDDLGLAVGNSLAAVHAGARQVEGAMNGIGERAGNCSLEEVIMAIKVRKDILNVHTAINHQEIWRTSQLVSQICNMPIPANKAIVGSGAFAHSSGIHQDGVLKNRENYEIMTPESIGLNQIQLNLTSRSGRAAVKHRMDEMGYKESEYNLDNLYDAFLKLADKKGQVFDYDLEALAFIGKQQEEPEHFRLDYFSVQSGSNDIATAAVKLACGEEVKAEAANGNGPVDAVYQAINRITDYNVELVKYSLTAKGHGKDALGQVDIVANYNGRRFHGVGLATDIVESSAKAMVHVLNNIWRAAEVEKELQRKAQHNENNKETV</sequence>
<keyword id="KW-0028">Amino-acid biosynthesis</keyword>
<keyword id="KW-0100">Branched-chain amino acid biosynthesis</keyword>
<keyword id="KW-0963">Cytoplasm</keyword>
<keyword id="KW-0432">Leucine biosynthesis</keyword>
<keyword id="KW-0464">Manganese</keyword>
<keyword id="KW-0479">Metal-binding</keyword>
<keyword id="KW-0808">Transferase</keyword>
<protein>
    <recommendedName>
        <fullName evidence="1">2-isopropylmalate synthase</fullName>
        <ecNumber evidence="1">2.3.3.13</ecNumber>
    </recommendedName>
    <alternativeName>
        <fullName evidence="1">Alpha-IPM synthase</fullName>
    </alternativeName>
    <alternativeName>
        <fullName evidence="1">Alpha-isopropylmalate synthase</fullName>
    </alternativeName>
</protein>
<gene>
    <name evidence="1" type="primary">leuA</name>
    <name type="ordered locus">ECED1_0074</name>
</gene>
<reference key="1">
    <citation type="journal article" date="2009" name="PLoS Genet.">
        <title>Organised genome dynamics in the Escherichia coli species results in highly diverse adaptive paths.</title>
        <authorList>
            <person name="Touchon M."/>
            <person name="Hoede C."/>
            <person name="Tenaillon O."/>
            <person name="Barbe V."/>
            <person name="Baeriswyl S."/>
            <person name="Bidet P."/>
            <person name="Bingen E."/>
            <person name="Bonacorsi S."/>
            <person name="Bouchier C."/>
            <person name="Bouvet O."/>
            <person name="Calteau A."/>
            <person name="Chiapello H."/>
            <person name="Clermont O."/>
            <person name="Cruveiller S."/>
            <person name="Danchin A."/>
            <person name="Diard M."/>
            <person name="Dossat C."/>
            <person name="Karoui M.E."/>
            <person name="Frapy E."/>
            <person name="Garry L."/>
            <person name="Ghigo J.M."/>
            <person name="Gilles A.M."/>
            <person name="Johnson J."/>
            <person name="Le Bouguenec C."/>
            <person name="Lescat M."/>
            <person name="Mangenot S."/>
            <person name="Martinez-Jehanne V."/>
            <person name="Matic I."/>
            <person name="Nassif X."/>
            <person name="Oztas S."/>
            <person name="Petit M.A."/>
            <person name="Pichon C."/>
            <person name="Rouy Z."/>
            <person name="Ruf C.S."/>
            <person name="Schneider D."/>
            <person name="Tourret J."/>
            <person name="Vacherie B."/>
            <person name="Vallenet D."/>
            <person name="Medigue C."/>
            <person name="Rocha E.P.C."/>
            <person name="Denamur E."/>
        </authorList>
    </citation>
    <scope>NUCLEOTIDE SEQUENCE [LARGE SCALE GENOMIC DNA]</scope>
    <source>
        <strain>ED1a</strain>
    </source>
</reference>
<feature type="chain" id="PRO_1000149188" description="2-isopropylmalate synthase">
    <location>
        <begin position="1"/>
        <end position="523"/>
    </location>
</feature>
<feature type="domain" description="Pyruvate carboxyltransferase" evidence="1">
    <location>
        <begin position="5"/>
        <end position="267"/>
    </location>
</feature>
<feature type="region of interest" description="Regulatory domain" evidence="1">
    <location>
        <begin position="392"/>
        <end position="523"/>
    </location>
</feature>
<feature type="binding site" evidence="1">
    <location>
        <position position="14"/>
    </location>
    <ligand>
        <name>Mn(2+)</name>
        <dbReference type="ChEBI" id="CHEBI:29035"/>
    </ligand>
</feature>
<feature type="binding site" evidence="1">
    <location>
        <position position="202"/>
    </location>
    <ligand>
        <name>Mn(2+)</name>
        <dbReference type="ChEBI" id="CHEBI:29035"/>
    </ligand>
</feature>
<feature type="binding site" evidence="1">
    <location>
        <position position="204"/>
    </location>
    <ligand>
        <name>Mn(2+)</name>
        <dbReference type="ChEBI" id="CHEBI:29035"/>
    </ligand>
</feature>
<feature type="binding site" evidence="1">
    <location>
        <position position="238"/>
    </location>
    <ligand>
        <name>Mn(2+)</name>
        <dbReference type="ChEBI" id="CHEBI:29035"/>
    </ligand>
</feature>
<proteinExistence type="inferred from homology"/>
<organism>
    <name type="scientific">Escherichia coli O81 (strain ED1a)</name>
    <dbReference type="NCBI Taxonomy" id="585397"/>
    <lineage>
        <taxon>Bacteria</taxon>
        <taxon>Pseudomonadati</taxon>
        <taxon>Pseudomonadota</taxon>
        <taxon>Gammaproteobacteria</taxon>
        <taxon>Enterobacterales</taxon>
        <taxon>Enterobacteriaceae</taxon>
        <taxon>Escherichia</taxon>
    </lineage>
</organism>
<evidence type="ECO:0000255" key="1">
    <source>
        <dbReference type="HAMAP-Rule" id="MF_01025"/>
    </source>
</evidence>
<comment type="function">
    <text evidence="1">Catalyzes the condensation of the acetyl group of acetyl-CoA with 3-methyl-2-oxobutanoate (2-ketoisovalerate) to form 3-carboxy-3-hydroxy-4-methylpentanoate (2-isopropylmalate).</text>
</comment>
<comment type="catalytic activity">
    <reaction evidence="1">
        <text>3-methyl-2-oxobutanoate + acetyl-CoA + H2O = (2S)-2-isopropylmalate + CoA + H(+)</text>
        <dbReference type="Rhea" id="RHEA:21524"/>
        <dbReference type="ChEBI" id="CHEBI:1178"/>
        <dbReference type="ChEBI" id="CHEBI:11851"/>
        <dbReference type="ChEBI" id="CHEBI:15377"/>
        <dbReference type="ChEBI" id="CHEBI:15378"/>
        <dbReference type="ChEBI" id="CHEBI:57287"/>
        <dbReference type="ChEBI" id="CHEBI:57288"/>
        <dbReference type="EC" id="2.3.3.13"/>
    </reaction>
</comment>
<comment type="cofactor">
    <cofactor evidence="1">
        <name>Mn(2+)</name>
        <dbReference type="ChEBI" id="CHEBI:29035"/>
    </cofactor>
</comment>
<comment type="pathway">
    <text evidence="1">Amino-acid biosynthesis; L-leucine biosynthesis; L-leucine from 3-methyl-2-oxobutanoate: step 1/4.</text>
</comment>
<comment type="subunit">
    <text evidence="1">Homodimer.</text>
</comment>
<comment type="subcellular location">
    <subcellularLocation>
        <location evidence="1">Cytoplasm</location>
    </subcellularLocation>
</comment>
<comment type="similarity">
    <text evidence="1">Belongs to the alpha-IPM synthase/homocitrate synthase family. LeuA type 1 subfamily.</text>
</comment>
<accession>B7MNT2</accession>
<dbReference type="EC" id="2.3.3.13" evidence="1"/>
<dbReference type="EMBL" id="CU928162">
    <property type="protein sequence ID" value="CAR06297.1"/>
    <property type="molecule type" value="Genomic_DNA"/>
</dbReference>
<dbReference type="RefSeq" id="WP_000082828.1">
    <property type="nucleotide sequence ID" value="NC_011745.1"/>
</dbReference>
<dbReference type="SMR" id="B7MNT2"/>
<dbReference type="KEGG" id="ecq:ECED1_0074"/>
<dbReference type="HOGENOM" id="CLU_022158_0_1_6"/>
<dbReference type="UniPathway" id="UPA00048">
    <property type="reaction ID" value="UER00070"/>
</dbReference>
<dbReference type="Proteomes" id="UP000000748">
    <property type="component" value="Chromosome"/>
</dbReference>
<dbReference type="GO" id="GO:0005829">
    <property type="term" value="C:cytosol"/>
    <property type="evidence" value="ECO:0007669"/>
    <property type="project" value="TreeGrafter"/>
</dbReference>
<dbReference type="GO" id="GO:0003852">
    <property type="term" value="F:2-isopropylmalate synthase activity"/>
    <property type="evidence" value="ECO:0007669"/>
    <property type="project" value="UniProtKB-UniRule"/>
</dbReference>
<dbReference type="GO" id="GO:0003985">
    <property type="term" value="F:acetyl-CoA C-acetyltransferase activity"/>
    <property type="evidence" value="ECO:0007669"/>
    <property type="project" value="UniProtKB-UniRule"/>
</dbReference>
<dbReference type="GO" id="GO:0030145">
    <property type="term" value="F:manganese ion binding"/>
    <property type="evidence" value="ECO:0007669"/>
    <property type="project" value="UniProtKB-UniRule"/>
</dbReference>
<dbReference type="GO" id="GO:0009098">
    <property type="term" value="P:L-leucine biosynthetic process"/>
    <property type="evidence" value="ECO:0007669"/>
    <property type="project" value="UniProtKB-UniRule"/>
</dbReference>
<dbReference type="CDD" id="cd07940">
    <property type="entry name" value="DRE_TIM_IPMS"/>
    <property type="match status" value="1"/>
</dbReference>
<dbReference type="FunFam" id="1.10.238.260:FF:000001">
    <property type="entry name" value="2-isopropylmalate synthase"/>
    <property type="match status" value="1"/>
</dbReference>
<dbReference type="FunFam" id="3.20.20.70:FF:000010">
    <property type="entry name" value="2-isopropylmalate synthase"/>
    <property type="match status" value="1"/>
</dbReference>
<dbReference type="FunFam" id="3.30.160.270:FF:000001">
    <property type="entry name" value="2-isopropylmalate synthase"/>
    <property type="match status" value="1"/>
</dbReference>
<dbReference type="Gene3D" id="1.10.238.260">
    <property type="match status" value="1"/>
</dbReference>
<dbReference type="Gene3D" id="3.30.160.270">
    <property type="match status" value="1"/>
</dbReference>
<dbReference type="Gene3D" id="3.20.20.70">
    <property type="entry name" value="Aldolase class I"/>
    <property type="match status" value="1"/>
</dbReference>
<dbReference type="HAMAP" id="MF_01025">
    <property type="entry name" value="LeuA_type1"/>
    <property type="match status" value="1"/>
</dbReference>
<dbReference type="InterPro" id="IPR050073">
    <property type="entry name" value="2-IPM_HCS-like"/>
</dbReference>
<dbReference type="InterPro" id="IPR013709">
    <property type="entry name" value="2-isopropylmalate_synth_dimer"/>
</dbReference>
<dbReference type="InterPro" id="IPR002034">
    <property type="entry name" value="AIPM/Hcit_synth_CS"/>
</dbReference>
<dbReference type="InterPro" id="IPR013785">
    <property type="entry name" value="Aldolase_TIM"/>
</dbReference>
<dbReference type="InterPro" id="IPR054691">
    <property type="entry name" value="LeuA/HCS_post-cat"/>
</dbReference>
<dbReference type="InterPro" id="IPR036230">
    <property type="entry name" value="LeuA_allosteric_dom_sf"/>
</dbReference>
<dbReference type="InterPro" id="IPR005671">
    <property type="entry name" value="LeuA_bact_synth"/>
</dbReference>
<dbReference type="InterPro" id="IPR000891">
    <property type="entry name" value="PYR_CT"/>
</dbReference>
<dbReference type="NCBIfam" id="TIGR00973">
    <property type="entry name" value="leuA_bact"/>
    <property type="match status" value="1"/>
</dbReference>
<dbReference type="NCBIfam" id="NF002084">
    <property type="entry name" value="PRK00915.1-1"/>
    <property type="match status" value="1"/>
</dbReference>
<dbReference type="NCBIfam" id="NF002086">
    <property type="entry name" value="PRK00915.1-3"/>
    <property type="match status" value="1"/>
</dbReference>
<dbReference type="PANTHER" id="PTHR10277:SF9">
    <property type="entry name" value="2-ISOPROPYLMALATE SYNTHASE 1, CHLOROPLASTIC-RELATED"/>
    <property type="match status" value="1"/>
</dbReference>
<dbReference type="PANTHER" id="PTHR10277">
    <property type="entry name" value="HOMOCITRATE SYNTHASE-RELATED"/>
    <property type="match status" value="1"/>
</dbReference>
<dbReference type="Pfam" id="PF22617">
    <property type="entry name" value="HCS_D2"/>
    <property type="match status" value="1"/>
</dbReference>
<dbReference type="Pfam" id="PF00682">
    <property type="entry name" value="HMGL-like"/>
    <property type="match status" value="1"/>
</dbReference>
<dbReference type="Pfam" id="PF08502">
    <property type="entry name" value="LeuA_dimer"/>
    <property type="match status" value="1"/>
</dbReference>
<dbReference type="SMART" id="SM00917">
    <property type="entry name" value="LeuA_dimer"/>
    <property type="match status" value="1"/>
</dbReference>
<dbReference type="SUPFAM" id="SSF110921">
    <property type="entry name" value="2-isopropylmalate synthase LeuA, allosteric (dimerisation) domain"/>
    <property type="match status" value="1"/>
</dbReference>
<dbReference type="SUPFAM" id="SSF51569">
    <property type="entry name" value="Aldolase"/>
    <property type="match status" value="1"/>
</dbReference>
<dbReference type="PROSITE" id="PS00815">
    <property type="entry name" value="AIPM_HOMOCIT_SYNTH_1"/>
    <property type="match status" value="1"/>
</dbReference>
<dbReference type="PROSITE" id="PS00816">
    <property type="entry name" value="AIPM_HOMOCIT_SYNTH_2"/>
    <property type="match status" value="1"/>
</dbReference>
<dbReference type="PROSITE" id="PS50991">
    <property type="entry name" value="PYR_CT"/>
    <property type="match status" value="1"/>
</dbReference>